<sequence>MTVIRLTRIGRKKKPFYRVVVTDSRKRRDGGWIESIGYYNPLEPKDIKIDKERLNYWKGVGAKMSERVEKLSQKA</sequence>
<comment type="similarity">
    <text evidence="1">Belongs to the bacterial ribosomal protein bS16 family.</text>
</comment>
<proteinExistence type="inferred from homology"/>
<dbReference type="EMBL" id="CP001173">
    <property type="protein sequence ID" value="ACI27846.1"/>
    <property type="molecule type" value="Genomic_DNA"/>
</dbReference>
<dbReference type="RefSeq" id="WP_000216121.1">
    <property type="nucleotide sequence ID" value="NC_011333.1"/>
</dbReference>
<dbReference type="SMR" id="B5Z8E7"/>
<dbReference type="KEGG" id="hpg:HPG27_1095"/>
<dbReference type="HOGENOM" id="CLU_100590_5_1_7"/>
<dbReference type="Proteomes" id="UP000001735">
    <property type="component" value="Chromosome"/>
</dbReference>
<dbReference type="GO" id="GO:0005737">
    <property type="term" value="C:cytoplasm"/>
    <property type="evidence" value="ECO:0007669"/>
    <property type="project" value="UniProtKB-ARBA"/>
</dbReference>
<dbReference type="GO" id="GO:0015935">
    <property type="term" value="C:small ribosomal subunit"/>
    <property type="evidence" value="ECO:0007669"/>
    <property type="project" value="TreeGrafter"/>
</dbReference>
<dbReference type="GO" id="GO:0003735">
    <property type="term" value="F:structural constituent of ribosome"/>
    <property type="evidence" value="ECO:0007669"/>
    <property type="project" value="InterPro"/>
</dbReference>
<dbReference type="GO" id="GO:0006412">
    <property type="term" value="P:translation"/>
    <property type="evidence" value="ECO:0007669"/>
    <property type="project" value="UniProtKB-UniRule"/>
</dbReference>
<dbReference type="FunFam" id="3.30.1320.10:FF:000005">
    <property type="entry name" value="30S ribosomal protein S16"/>
    <property type="match status" value="1"/>
</dbReference>
<dbReference type="Gene3D" id="3.30.1320.10">
    <property type="match status" value="1"/>
</dbReference>
<dbReference type="HAMAP" id="MF_00385">
    <property type="entry name" value="Ribosomal_bS16"/>
    <property type="match status" value="1"/>
</dbReference>
<dbReference type="InterPro" id="IPR000307">
    <property type="entry name" value="Ribosomal_bS16"/>
</dbReference>
<dbReference type="InterPro" id="IPR020592">
    <property type="entry name" value="Ribosomal_bS16_CS"/>
</dbReference>
<dbReference type="InterPro" id="IPR023803">
    <property type="entry name" value="Ribosomal_bS16_dom_sf"/>
</dbReference>
<dbReference type="NCBIfam" id="TIGR00002">
    <property type="entry name" value="S16"/>
    <property type="match status" value="1"/>
</dbReference>
<dbReference type="PANTHER" id="PTHR12919">
    <property type="entry name" value="30S RIBOSOMAL PROTEIN S16"/>
    <property type="match status" value="1"/>
</dbReference>
<dbReference type="PANTHER" id="PTHR12919:SF20">
    <property type="entry name" value="SMALL RIBOSOMAL SUBUNIT PROTEIN BS16M"/>
    <property type="match status" value="1"/>
</dbReference>
<dbReference type="Pfam" id="PF00886">
    <property type="entry name" value="Ribosomal_S16"/>
    <property type="match status" value="1"/>
</dbReference>
<dbReference type="SUPFAM" id="SSF54565">
    <property type="entry name" value="Ribosomal protein S16"/>
    <property type="match status" value="1"/>
</dbReference>
<dbReference type="PROSITE" id="PS00732">
    <property type="entry name" value="RIBOSOMAL_S16"/>
    <property type="match status" value="1"/>
</dbReference>
<feature type="chain" id="PRO_1000196415" description="Small ribosomal subunit protein bS16">
    <location>
        <begin position="1"/>
        <end position="75"/>
    </location>
</feature>
<protein>
    <recommendedName>
        <fullName evidence="1">Small ribosomal subunit protein bS16</fullName>
    </recommendedName>
    <alternativeName>
        <fullName evidence="2">30S ribosomal protein S16</fullName>
    </alternativeName>
</protein>
<accession>B5Z8E7</accession>
<name>RS16_HELPG</name>
<reference key="1">
    <citation type="journal article" date="2009" name="J. Bacteriol.">
        <title>The complete genome sequence of Helicobacter pylori strain G27.</title>
        <authorList>
            <person name="Baltrus D.A."/>
            <person name="Amieva M.R."/>
            <person name="Covacci A."/>
            <person name="Lowe T.M."/>
            <person name="Merrell D.S."/>
            <person name="Ottemann K.M."/>
            <person name="Stein M."/>
            <person name="Salama N.R."/>
            <person name="Guillemin K."/>
        </authorList>
    </citation>
    <scope>NUCLEOTIDE SEQUENCE [LARGE SCALE GENOMIC DNA]</scope>
    <source>
        <strain>G27</strain>
    </source>
</reference>
<keyword id="KW-1185">Reference proteome</keyword>
<keyword id="KW-0687">Ribonucleoprotein</keyword>
<keyword id="KW-0689">Ribosomal protein</keyword>
<evidence type="ECO:0000255" key="1">
    <source>
        <dbReference type="HAMAP-Rule" id="MF_00385"/>
    </source>
</evidence>
<evidence type="ECO:0000305" key="2"/>
<gene>
    <name evidence="1" type="primary">rpsP</name>
    <name type="ordered locus">HPG27_1095</name>
</gene>
<organism>
    <name type="scientific">Helicobacter pylori (strain G27)</name>
    <dbReference type="NCBI Taxonomy" id="563041"/>
    <lineage>
        <taxon>Bacteria</taxon>
        <taxon>Pseudomonadati</taxon>
        <taxon>Campylobacterota</taxon>
        <taxon>Epsilonproteobacteria</taxon>
        <taxon>Campylobacterales</taxon>
        <taxon>Helicobacteraceae</taxon>
        <taxon>Helicobacter</taxon>
    </lineage>
</organism>